<gene>
    <name evidence="10" type="primary">mdr2</name>
    <name type="ORF">AFUA_4G10000</name>
</gene>
<keyword id="KW-0067">ATP-binding</keyword>
<keyword id="KW-1003">Cell membrane</keyword>
<keyword id="KW-0325">Glycoprotein</keyword>
<keyword id="KW-0472">Membrane</keyword>
<keyword id="KW-0547">Nucleotide-binding</keyword>
<keyword id="KW-1185">Reference proteome</keyword>
<keyword id="KW-0812">Transmembrane</keyword>
<keyword id="KW-1133">Transmembrane helix</keyword>
<keyword id="KW-0813">Transport</keyword>
<comment type="function">
    <text evidence="12">Pleiotropic ABC efflux transporter that may be involved in A.fumigatus adaptation to azoles.</text>
</comment>
<comment type="subcellular location">
    <subcellularLocation>
        <location evidence="11">Cell membrane</location>
        <topology evidence="1">Multi-pass membrane protein</topology>
    </subcellularLocation>
</comment>
<comment type="induction">
    <text evidence="6 7 8 9">Expression is up-regulated during biofilm growth (PubMed:21724936). Expression is also induced upon amphotericin B treatment (PubMed:18838595). Expression is down-regulated by tetrandrine and posaconazole in a synergistic manner (PubMed:28080217). Expression is increased in clinical azole-resistant isolates (PubMed:15504870).</text>
</comment>
<comment type="similarity">
    <text evidence="11">Belongs to the ABC transporter superfamily. ABCB family. Mitochondrial peptide exporter (TC 3.A.1.212) subfamily.</text>
</comment>
<dbReference type="EMBL" id="AAHF01000005">
    <property type="protein sequence ID" value="EAL89788.1"/>
    <property type="molecule type" value="Genomic_DNA"/>
</dbReference>
<dbReference type="RefSeq" id="XP_751826.1">
    <property type="nucleotide sequence ID" value="XM_746733.1"/>
</dbReference>
<dbReference type="SMR" id="Q4WPP6"/>
<dbReference type="FunCoup" id="Q4WPP6">
    <property type="interactions" value="462"/>
</dbReference>
<dbReference type="STRING" id="330879.Q4WPP6"/>
<dbReference type="GlyCosmos" id="Q4WPP6">
    <property type="glycosylation" value="6 sites, No reported glycans"/>
</dbReference>
<dbReference type="EnsemblFungi" id="EAL89788">
    <property type="protein sequence ID" value="EAL89788"/>
    <property type="gene ID" value="AFUA_4G10000"/>
</dbReference>
<dbReference type="GeneID" id="3509566"/>
<dbReference type="KEGG" id="afm:AFUA_4G10000"/>
<dbReference type="VEuPathDB" id="FungiDB:Afu4g10000"/>
<dbReference type="eggNOG" id="KOG0058">
    <property type="taxonomic scope" value="Eukaryota"/>
</dbReference>
<dbReference type="HOGENOM" id="CLU_000604_84_3_1"/>
<dbReference type="InParanoid" id="Q4WPP6"/>
<dbReference type="OMA" id="MYTGHTL"/>
<dbReference type="OrthoDB" id="6500128at2759"/>
<dbReference type="Proteomes" id="UP000002530">
    <property type="component" value="Chromosome 4"/>
</dbReference>
<dbReference type="GO" id="GO:0005743">
    <property type="term" value="C:mitochondrial inner membrane"/>
    <property type="evidence" value="ECO:0000318"/>
    <property type="project" value="GO_Central"/>
</dbReference>
<dbReference type="GO" id="GO:0005886">
    <property type="term" value="C:plasma membrane"/>
    <property type="evidence" value="ECO:0007669"/>
    <property type="project" value="UniProtKB-SubCell"/>
</dbReference>
<dbReference type="GO" id="GO:0015421">
    <property type="term" value="F:ABC-type oligopeptide transporter activity"/>
    <property type="evidence" value="ECO:0000318"/>
    <property type="project" value="GO_Central"/>
</dbReference>
<dbReference type="GO" id="GO:0005524">
    <property type="term" value="F:ATP binding"/>
    <property type="evidence" value="ECO:0007669"/>
    <property type="project" value="UniProtKB-KW"/>
</dbReference>
<dbReference type="GO" id="GO:0016887">
    <property type="term" value="F:ATP hydrolysis activity"/>
    <property type="evidence" value="ECO:0007669"/>
    <property type="project" value="InterPro"/>
</dbReference>
<dbReference type="GO" id="GO:0090374">
    <property type="term" value="P:oligopeptide export from mitochondrion"/>
    <property type="evidence" value="ECO:0000318"/>
    <property type="project" value="GO_Central"/>
</dbReference>
<dbReference type="CDD" id="cd18573">
    <property type="entry name" value="ABC_6TM_ABCB10_like"/>
    <property type="match status" value="1"/>
</dbReference>
<dbReference type="CDD" id="cd03249">
    <property type="entry name" value="ABC_MTABC3_MDL1_MDL2"/>
    <property type="match status" value="1"/>
</dbReference>
<dbReference type="FunFam" id="1.20.1560.10:FF:000095">
    <property type="entry name" value="ABC multidrug transporter Mdr2"/>
    <property type="match status" value="1"/>
</dbReference>
<dbReference type="FunFam" id="3.40.50.300:FF:000218">
    <property type="entry name" value="Multidrug ABC transporter ATP-binding protein"/>
    <property type="match status" value="1"/>
</dbReference>
<dbReference type="Gene3D" id="1.20.1560.10">
    <property type="entry name" value="ABC transporter type 1, transmembrane domain"/>
    <property type="match status" value="1"/>
</dbReference>
<dbReference type="Gene3D" id="3.40.50.300">
    <property type="entry name" value="P-loop containing nucleotide triphosphate hydrolases"/>
    <property type="match status" value="1"/>
</dbReference>
<dbReference type="InterPro" id="IPR003593">
    <property type="entry name" value="AAA+_ATPase"/>
</dbReference>
<dbReference type="InterPro" id="IPR011527">
    <property type="entry name" value="ABC1_TM_dom"/>
</dbReference>
<dbReference type="InterPro" id="IPR036640">
    <property type="entry name" value="ABC1_TM_sf"/>
</dbReference>
<dbReference type="InterPro" id="IPR003439">
    <property type="entry name" value="ABC_transporter-like_ATP-bd"/>
</dbReference>
<dbReference type="InterPro" id="IPR017871">
    <property type="entry name" value="ABC_transporter-like_CS"/>
</dbReference>
<dbReference type="InterPro" id="IPR027417">
    <property type="entry name" value="P-loop_NTPase"/>
</dbReference>
<dbReference type="InterPro" id="IPR039421">
    <property type="entry name" value="Type_1_exporter"/>
</dbReference>
<dbReference type="PANTHER" id="PTHR43394:SF1">
    <property type="entry name" value="ATP-BINDING CASSETTE SUB-FAMILY B MEMBER 10, MITOCHONDRIAL"/>
    <property type="match status" value="1"/>
</dbReference>
<dbReference type="PANTHER" id="PTHR43394">
    <property type="entry name" value="ATP-DEPENDENT PERMEASE MDL1, MITOCHONDRIAL"/>
    <property type="match status" value="1"/>
</dbReference>
<dbReference type="Pfam" id="PF00664">
    <property type="entry name" value="ABC_membrane"/>
    <property type="match status" value="1"/>
</dbReference>
<dbReference type="Pfam" id="PF00005">
    <property type="entry name" value="ABC_tran"/>
    <property type="match status" value="1"/>
</dbReference>
<dbReference type="SMART" id="SM00382">
    <property type="entry name" value="AAA"/>
    <property type="match status" value="1"/>
</dbReference>
<dbReference type="SUPFAM" id="SSF90123">
    <property type="entry name" value="ABC transporter transmembrane region"/>
    <property type="match status" value="1"/>
</dbReference>
<dbReference type="SUPFAM" id="SSF52540">
    <property type="entry name" value="P-loop containing nucleoside triphosphate hydrolases"/>
    <property type="match status" value="1"/>
</dbReference>
<dbReference type="PROSITE" id="PS50929">
    <property type="entry name" value="ABC_TM1F"/>
    <property type="match status" value="1"/>
</dbReference>
<dbReference type="PROSITE" id="PS00211">
    <property type="entry name" value="ABC_TRANSPORTER_1"/>
    <property type="match status" value="1"/>
</dbReference>
<dbReference type="PROSITE" id="PS50893">
    <property type="entry name" value="ABC_TRANSPORTER_2"/>
    <property type="match status" value="1"/>
</dbReference>
<feature type="chain" id="PRO_0000445103" description="ABC multidrug transporter mdr2">
    <location>
        <begin position="1"/>
        <end position="791"/>
    </location>
</feature>
<feature type="transmembrane region" description="Helical" evidence="1 3">
    <location>
        <begin position="182"/>
        <end position="202"/>
    </location>
</feature>
<feature type="transmembrane region" description="Helical" evidence="1 3">
    <location>
        <begin position="220"/>
        <end position="240"/>
    </location>
</feature>
<feature type="transmembrane region" description="Helical" evidence="1 3">
    <location>
        <begin position="307"/>
        <end position="324"/>
    </location>
</feature>
<feature type="transmembrane region" description="Helical" evidence="1 3">
    <location>
        <begin position="326"/>
        <end position="346"/>
    </location>
</feature>
<feature type="transmembrane region" description="Helical" evidence="1 3">
    <location>
        <begin position="422"/>
        <end position="442"/>
    </location>
</feature>
<feature type="transmembrane region" description="Helical" evidence="1 3">
    <location>
        <begin position="445"/>
        <end position="465"/>
    </location>
</feature>
<feature type="domain" description="ABC transmembrane type-1" evidence="3">
    <location>
        <begin position="182"/>
        <end position="471"/>
    </location>
</feature>
<feature type="domain" description="ABC transporter" evidence="2">
    <location>
        <begin position="504"/>
        <end position="741"/>
    </location>
</feature>
<feature type="region of interest" description="Disordered" evidence="5">
    <location>
        <begin position="754"/>
        <end position="791"/>
    </location>
</feature>
<feature type="compositionally biased region" description="Polar residues" evidence="5">
    <location>
        <begin position="754"/>
        <end position="769"/>
    </location>
</feature>
<feature type="compositionally biased region" description="Acidic residues" evidence="5">
    <location>
        <begin position="770"/>
        <end position="779"/>
    </location>
</feature>
<feature type="binding site" evidence="2">
    <location>
        <begin position="539"/>
        <end position="546"/>
    </location>
    <ligand>
        <name>ATP</name>
        <dbReference type="ChEBI" id="CHEBI:30616"/>
    </ligand>
</feature>
<feature type="glycosylation site" description="N-linked (GlcNAc...) asparagine" evidence="4">
    <location>
        <position position="147"/>
    </location>
</feature>
<feature type="glycosylation site" description="N-linked (GlcNAc...) asparagine" evidence="4">
    <location>
        <position position="303"/>
    </location>
</feature>
<feature type="glycosylation site" description="N-linked (GlcNAc...) asparagine" evidence="4">
    <location>
        <position position="352"/>
    </location>
</feature>
<feature type="glycosylation site" description="N-linked (GlcNAc...) asparagine" evidence="4">
    <location>
        <position position="421"/>
    </location>
</feature>
<feature type="glycosylation site" description="N-linked (GlcNAc...) asparagine" evidence="4">
    <location>
        <position position="508"/>
    </location>
</feature>
<feature type="glycosylation site" description="N-linked (GlcNAc...) asparagine" evidence="4">
    <location>
        <position position="692"/>
    </location>
</feature>
<reference key="1">
    <citation type="journal article" date="2005" name="Nature">
        <title>Genomic sequence of the pathogenic and allergenic filamentous fungus Aspergillus fumigatus.</title>
        <authorList>
            <person name="Nierman W.C."/>
            <person name="Pain A."/>
            <person name="Anderson M.J."/>
            <person name="Wortman J.R."/>
            <person name="Kim H.S."/>
            <person name="Arroyo J."/>
            <person name="Berriman M."/>
            <person name="Abe K."/>
            <person name="Archer D.B."/>
            <person name="Bermejo C."/>
            <person name="Bennett J.W."/>
            <person name="Bowyer P."/>
            <person name="Chen D."/>
            <person name="Collins M."/>
            <person name="Coulsen R."/>
            <person name="Davies R."/>
            <person name="Dyer P.S."/>
            <person name="Farman M.L."/>
            <person name="Fedorova N."/>
            <person name="Fedorova N.D."/>
            <person name="Feldblyum T.V."/>
            <person name="Fischer R."/>
            <person name="Fosker N."/>
            <person name="Fraser A."/>
            <person name="Garcia J.L."/>
            <person name="Garcia M.J."/>
            <person name="Goble A."/>
            <person name="Goldman G.H."/>
            <person name="Gomi K."/>
            <person name="Griffith-Jones S."/>
            <person name="Gwilliam R."/>
            <person name="Haas B.J."/>
            <person name="Haas H."/>
            <person name="Harris D.E."/>
            <person name="Horiuchi H."/>
            <person name="Huang J."/>
            <person name="Humphray S."/>
            <person name="Jimenez J."/>
            <person name="Keller N."/>
            <person name="Khouri H."/>
            <person name="Kitamoto K."/>
            <person name="Kobayashi T."/>
            <person name="Konzack S."/>
            <person name="Kulkarni R."/>
            <person name="Kumagai T."/>
            <person name="Lafton A."/>
            <person name="Latge J.-P."/>
            <person name="Li W."/>
            <person name="Lord A."/>
            <person name="Lu C."/>
            <person name="Majoros W.H."/>
            <person name="May G.S."/>
            <person name="Miller B.L."/>
            <person name="Mohamoud Y."/>
            <person name="Molina M."/>
            <person name="Monod M."/>
            <person name="Mouyna I."/>
            <person name="Mulligan S."/>
            <person name="Murphy L.D."/>
            <person name="O'Neil S."/>
            <person name="Paulsen I."/>
            <person name="Penalva M.A."/>
            <person name="Pertea M."/>
            <person name="Price C."/>
            <person name="Pritchard B.L."/>
            <person name="Quail M.A."/>
            <person name="Rabbinowitsch E."/>
            <person name="Rawlins N."/>
            <person name="Rajandream M.A."/>
            <person name="Reichard U."/>
            <person name="Renauld H."/>
            <person name="Robson G.D."/>
            <person name="Rodriguez de Cordoba S."/>
            <person name="Rodriguez-Pena J.M."/>
            <person name="Ronning C.M."/>
            <person name="Rutter S."/>
            <person name="Salzberg S.L."/>
            <person name="Sanchez M."/>
            <person name="Sanchez-Ferrero J.C."/>
            <person name="Saunders D."/>
            <person name="Seeger K."/>
            <person name="Squares R."/>
            <person name="Squares S."/>
            <person name="Takeuchi M."/>
            <person name="Tekaia F."/>
            <person name="Turner G."/>
            <person name="Vazquez de Aldana C.R."/>
            <person name="Weidman J."/>
            <person name="White O."/>
            <person name="Woodward J.R."/>
            <person name="Yu J.-H."/>
            <person name="Fraser C.M."/>
            <person name="Galagan J.E."/>
            <person name="Asai K."/>
            <person name="Machida M."/>
            <person name="Hall N."/>
            <person name="Barrell B.G."/>
            <person name="Denning D.W."/>
        </authorList>
    </citation>
    <scope>NUCLEOTIDE SEQUENCE [LARGE SCALE GENOMIC DNA]</scope>
    <source>
        <strain>ATCC MYA-4609 / CBS 101355 / FGSC A1100 / Af293</strain>
    </source>
</reference>
<reference key="2">
    <citation type="journal article" date="1997" name="Gene">
        <title>Genes encoding multiple drug resistance-like proteins in Aspergillus fumigatus and Aspergillus flavus.</title>
        <authorList>
            <person name="Tobin M.B."/>
            <person name="Peery R.B."/>
            <person name="Skatrud P.L."/>
        </authorList>
    </citation>
    <scope>IDENTIFICATION</scope>
    <scope>FUNCTION</scope>
</reference>
<reference key="3">
    <citation type="journal article" date="2004" name="Antimicrob. Agents Chemother.">
        <title>In vitro evolution of itraconazole resistance in Aspergillus fumigatus involves multiple mechanisms of resistance.</title>
        <authorList>
            <person name="da Silva Ferreira M.E."/>
            <person name="Capellaro J.L."/>
            <person name="dos Reis Marques E."/>
            <person name="Malavazi I."/>
            <person name="Perlin D."/>
            <person name="Park S."/>
            <person name="Anderson J.B."/>
            <person name="Colombo A.L."/>
            <person name="Arthington-Skaggs B.A."/>
            <person name="Goldman M.H."/>
            <person name="Goldman G.H."/>
        </authorList>
    </citation>
    <scope>INDUCTION</scope>
</reference>
<reference key="4">
    <citation type="journal article" date="2008" name="Antimicrob. Agents Chemother.">
        <title>Proteomic and transcriptomic analysis of Aspergillus fumigatus on exposure to amphotericin B.</title>
        <authorList>
            <person name="Gautam P."/>
            <person name="Shankar J."/>
            <person name="Madan T."/>
            <person name="Sirdeshmukh R."/>
            <person name="Sundaram C.S."/>
            <person name="Gade W.N."/>
            <person name="Basir S.F."/>
            <person name="Sarma P.U."/>
        </authorList>
    </citation>
    <scope>INDUCTION</scope>
</reference>
<reference key="5">
    <citation type="journal article" date="2012" name="Eukaryot. Cell">
        <title>Global transcriptome changes underlying colony growth in the opportunistic human pathogen Aspergillus fumigatus.</title>
        <authorList>
            <person name="Gibbons J.G."/>
            <person name="Beauvais A."/>
            <person name="Beau R."/>
            <person name="McGary K.L."/>
            <person name="Latge J.P."/>
            <person name="Rokas A."/>
        </authorList>
    </citation>
    <scope>INDUCTION</scope>
</reference>
<reference key="6">
    <citation type="journal article" date="2017" name="Microb. Drug Resist.">
        <title>Synergistic effects of tetrandrine with posaconazole against Aspergillus fumigatus.</title>
        <authorList>
            <person name="Li S.X."/>
            <person name="Song Y.J."/>
            <person name="Jiang L."/>
            <person name="Zhao Y.J."/>
            <person name="Guo H."/>
            <person name="Li D.M."/>
            <person name="Zhu K.J."/>
            <person name="Zhang H."/>
        </authorList>
    </citation>
    <scope>INDUCTION</scope>
</reference>
<name>MDR2_ASPFU</name>
<accession>Q4WPP6</accession>
<organism>
    <name type="scientific">Aspergillus fumigatus (strain ATCC MYA-4609 / CBS 101355 / FGSC A1100 / Af293)</name>
    <name type="common">Neosartorya fumigata</name>
    <dbReference type="NCBI Taxonomy" id="330879"/>
    <lineage>
        <taxon>Eukaryota</taxon>
        <taxon>Fungi</taxon>
        <taxon>Dikarya</taxon>
        <taxon>Ascomycota</taxon>
        <taxon>Pezizomycotina</taxon>
        <taxon>Eurotiomycetes</taxon>
        <taxon>Eurotiomycetidae</taxon>
        <taxon>Eurotiales</taxon>
        <taxon>Aspergillaceae</taxon>
        <taxon>Aspergillus</taxon>
        <taxon>Aspergillus subgen. Fumigati</taxon>
    </lineage>
</organism>
<evidence type="ECO:0000255" key="1"/>
<evidence type="ECO:0000255" key="2">
    <source>
        <dbReference type="PROSITE-ProRule" id="PRU00434"/>
    </source>
</evidence>
<evidence type="ECO:0000255" key="3">
    <source>
        <dbReference type="PROSITE-ProRule" id="PRU00441"/>
    </source>
</evidence>
<evidence type="ECO:0000255" key="4">
    <source>
        <dbReference type="PROSITE-ProRule" id="PRU00498"/>
    </source>
</evidence>
<evidence type="ECO:0000256" key="5">
    <source>
        <dbReference type="SAM" id="MobiDB-lite"/>
    </source>
</evidence>
<evidence type="ECO:0000269" key="6">
    <source>
    </source>
</evidence>
<evidence type="ECO:0000269" key="7">
    <source>
    </source>
</evidence>
<evidence type="ECO:0000269" key="8">
    <source>
    </source>
</evidence>
<evidence type="ECO:0000269" key="9">
    <source>
    </source>
</evidence>
<evidence type="ECO:0000303" key="10">
    <source>
    </source>
</evidence>
<evidence type="ECO:0000305" key="11"/>
<evidence type="ECO:0000305" key="12">
    <source>
    </source>
</evidence>
<protein>
    <recommendedName>
        <fullName evidence="10">ABC multidrug transporter mdr2</fullName>
    </recommendedName>
</protein>
<proteinExistence type="evidence at transcript level"/>
<sequence>MRGIRSLPCWAPGLSTKRIPPRELFADLFPNACVISARHSARNGLIRQFSGCSGSISNSCNPRPYRSAITSLLSANVCSKGVSAVQPRFLSTVRLFSTSQRSLEPKSNVKSTGGQVVRPELHQDQEHEDIEKGFELSERAAQAAQVNLSAKLAKDGAAGKKAGFKEIWRLLLIARPEAKKLALAFLFLLVSSGITMSIPFSIGKIMDTSTKATTEGGNELFGLSLPMFYGALAGILTLGAAANYGRIIILRIVGERIVARLRSKLFRQTFVQDAEFFDANRVGDLISRLSSDTIIVGKSITQNLSDGLRAAVSGAAGFGLMAYVSLKLSSILALLLPPIGLGAFFYGRAIRNLSRQIQRNLGTLTKIAEERLGNVKTSQSFAGEVLEVRRYNNQVRKIFELGKKESLISATFFSSTGFAGNMTILALLYVGGGMVQSGAITIGELTSFLMYTAYAGSSMFGLSSFYSELMKGVGAASRLFELQDRQPTISPTKGEKVASARGPIRFENVTFSYPTRPAVPIFRDLNFEIPQGTNVAIVGPSGGGKSTIASILLRFYSPTEGRVLIGGKDITHMNAKSLRRKIGIVSQEPVLFSGTIAENIAYGKPQAKRSEIVAAARKANCQFISDFPDGLDTQVGPRGAQLSGGQKQRIAIARALIKDPDILILDEATSALDAESETLVNSALTALLRGNNTTISIAHRLSTIKRSDTIIVLGPDGRVAEQGSYEELSARPDGAFTKLMEWQMSGGEVMDQLANTPANPVAQETSWDLQSDDGTEISEDTNIPSEPRTID</sequence>